<sequence length="252" mass="28225">MQLTRCCFVFLVQGSLYLVICGQEDGPPGSEDPEHDDHEGQPRPRVPRKRGHISPKSRPLANSTLLGLLAPPGEVWGILGQPPNRPKQSPLPSTKVKKIFGWGDFYSNIKTVALNLLVTGKIVDHGNGTFSVHFRHNATGQGNISISLVPPSKAVEFHQEQQIFIEAKASKIFNCRMEWEKVERGRRTSLCTHDPAKICSRDHAQSSATWSCSQPFKIVCVYIAFYSTDYRLVQKVCPDYNYHSDTPYYPSG</sequence>
<accession>Q9Z2N5</accession>
<organism>
    <name type="scientific">Rattus norvegicus</name>
    <name type="common">Rat</name>
    <dbReference type="NCBI Taxonomy" id="10116"/>
    <lineage>
        <taxon>Eukaryota</taxon>
        <taxon>Metazoa</taxon>
        <taxon>Chordata</taxon>
        <taxon>Craniata</taxon>
        <taxon>Vertebrata</taxon>
        <taxon>Euteleostomi</taxon>
        <taxon>Mammalia</taxon>
        <taxon>Eutheria</taxon>
        <taxon>Euarchontoglires</taxon>
        <taxon>Glires</taxon>
        <taxon>Rodentia</taxon>
        <taxon>Myomorpha</taxon>
        <taxon>Muroidea</taxon>
        <taxon>Muridae</taxon>
        <taxon>Murinae</taxon>
        <taxon>Rattus</taxon>
    </lineage>
</organism>
<protein>
    <recommendedName>
        <fullName>Neurexophilin-3</fullName>
    </recommendedName>
</protein>
<keyword id="KW-0325">Glycoprotein</keyword>
<keyword id="KW-1185">Reference proteome</keyword>
<keyword id="KW-0964">Secreted</keyword>
<keyword id="KW-0732">Signal</keyword>
<reference key="1">
    <citation type="journal article" date="1998" name="J. Neurosci.">
        <title>Neurexophilins form a conserved family of neuropeptide-like glycoproteins.</title>
        <authorList>
            <person name="Missler M."/>
            <person name="Suedhof T.C."/>
        </authorList>
    </citation>
    <scope>NUCLEOTIDE SEQUENCE [MRNA]</scope>
    <source>
        <tissue>Brain</tissue>
    </source>
</reference>
<feature type="signal peptide" evidence="2">
    <location>
        <begin position="1"/>
        <end position="22"/>
    </location>
</feature>
<feature type="chain" id="PRO_0000020067" description="Neurexophilin-3">
    <location>
        <begin position="23"/>
        <end position="252"/>
    </location>
</feature>
<feature type="region of interest" description="II">
    <location>
        <begin position="23"/>
        <end position="75"/>
    </location>
</feature>
<feature type="region of interest" description="Disordered" evidence="3">
    <location>
        <begin position="27"/>
        <end position="59"/>
    </location>
</feature>
<feature type="region of interest" description="III">
    <location>
        <begin position="76"/>
        <end position="157"/>
    </location>
</feature>
<feature type="region of interest" description="IV (linker domain)">
    <location>
        <begin position="158"/>
        <end position="166"/>
    </location>
</feature>
<feature type="region of interest" description="V (Cys-rich)">
    <location>
        <begin position="167"/>
        <end position="252"/>
    </location>
</feature>
<feature type="compositionally biased region" description="Basic residues" evidence="3">
    <location>
        <begin position="45"/>
        <end position="55"/>
    </location>
</feature>
<feature type="glycosylation site" description="N-linked (GlcNAc...) asparagine" evidence="2">
    <location>
        <position position="62"/>
    </location>
</feature>
<feature type="glycosylation site" description="N-linked (GlcNAc...) asparagine" evidence="2">
    <location>
        <position position="127"/>
    </location>
</feature>
<feature type="glycosylation site" description="N-linked (GlcNAc...) asparagine" evidence="2">
    <location>
        <position position="137"/>
    </location>
</feature>
<feature type="glycosylation site" description="N-linked (GlcNAc...) asparagine" evidence="2">
    <location>
        <position position="143"/>
    </location>
</feature>
<dbReference type="EMBL" id="AF042713">
    <property type="protein sequence ID" value="AAD02226.1"/>
    <property type="molecule type" value="mRNA"/>
</dbReference>
<dbReference type="RefSeq" id="NP_067711.1">
    <property type="nucleotide sequence ID" value="NM_021679.1"/>
</dbReference>
<dbReference type="SMR" id="Q9Z2N5"/>
<dbReference type="FunCoup" id="Q9Z2N5">
    <property type="interactions" value="746"/>
</dbReference>
<dbReference type="STRING" id="10116.ENSRNOP00000007133"/>
<dbReference type="GlyCosmos" id="Q9Z2N5">
    <property type="glycosylation" value="4 sites, No reported glycans"/>
</dbReference>
<dbReference type="GlyGen" id="Q9Z2N5">
    <property type="glycosylation" value="4 sites"/>
</dbReference>
<dbReference type="PhosphoSitePlus" id="Q9Z2N5"/>
<dbReference type="PaxDb" id="10116-ENSRNOP00000007133"/>
<dbReference type="GeneID" id="59315"/>
<dbReference type="KEGG" id="rno:59315"/>
<dbReference type="AGR" id="RGD:620693"/>
<dbReference type="CTD" id="11248"/>
<dbReference type="RGD" id="620693">
    <property type="gene designation" value="Nxph3"/>
</dbReference>
<dbReference type="eggNOG" id="ENOG502QSZ5">
    <property type="taxonomic scope" value="Eukaryota"/>
</dbReference>
<dbReference type="InParanoid" id="Q9Z2N5"/>
<dbReference type="OrthoDB" id="9887748at2759"/>
<dbReference type="PhylomeDB" id="Q9Z2N5"/>
<dbReference type="PRO" id="PR:Q9Z2N5"/>
<dbReference type="Proteomes" id="UP000002494">
    <property type="component" value="Unplaced"/>
</dbReference>
<dbReference type="GO" id="GO:0005576">
    <property type="term" value="C:extracellular region"/>
    <property type="evidence" value="ECO:0007669"/>
    <property type="project" value="UniProtKB-SubCell"/>
</dbReference>
<dbReference type="GO" id="GO:0005102">
    <property type="term" value="F:signaling receptor binding"/>
    <property type="evidence" value="ECO:0000266"/>
    <property type="project" value="RGD"/>
</dbReference>
<dbReference type="InterPro" id="IPR010450">
    <property type="entry name" value="Nxph"/>
</dbReference>
<dbReference type="InterPro" id="IPR026845">
    <property type="entry name" value="NXPH/NXPE"/>
</dbReference>
<dbReference type="PANTHER" id="PTHR17103">
    <property type="entry name" value="NEUREXOPHILIN"/>
    <property type="match status" value="1"/>
</dbReference>
<dbReference type="PANTHER" id="PTHR17103:SF14">
    <property type="entry name" value="NEUREXOPHILIN-3"/>
    <property type="match status" value="1"/>
</dbReference>
<dbReference type="Pfam" id="PF06312">
    <property type="entry name" value="Neurexophilin"/>
    <property type="match status" value="1"/>
</dbReference>
<dbReference type="PIRSF" id="PIRSF038019">
    <property type="entry name" value="Neurexophilin"/>
    <property type="match status" value="1"/>
</dbReference>
<proteinExistence type="evidence at transcript level"/>
<gene>
    <name type="primary">Nxph3</name>
    <name type="synonym">Nph3</name>
</gene>
<evidence type="ECO:0000250" key="1"/>
<evidence type="ECO:0000255" key="2"/>
<evidence type="ECO:0000256" key="3">
    <source>
        <dbReference type="SAM" id="MobiDB-lite"/>
    </source>
</evidence>
<evidence type="ECO:0000305" key="4"/>
<comment type="function">
    <text evidence="1">May be signaling molecules that resemble neuropeptides. Ligand for alpha-neurexins (By similarity).</text>
</comment>
<comment type="subcellular location">
    <subcellularLocation>
        <location evidence="4">Secreted</location>
    </subcellularLocation>
</comment>
<comment type="tissue specificity">
    <text>Brain. Detected in several other tissues.</text>
</comment>
<comment type="PTM">
    <text evidence="1">May be proteolytically processed at the boundary between the N-terminal non-conserved and the central conserved domain in neuron-like cells.</text>
</comment>
<comment type="similarity">
    <text evidence="4">Belongs to the neurexophilin family.</text>
</comment>
<name>NXPH3_RAT</name>